<keyword id="KW-0997">Cell inner membrane</keyword>
<keyword id="KW-1003">Cell membrane</keyword>
<keyword id="KW-0444">Lipid biosynthesis</keyword>
<keyword id="KW-0443">Lipid metabolism</keyword>
<keyword id="KW-0472">Membrane</keyword>
<keyword id="KW-0594">Phospholipid biosynthesis</keyword>
<keyword id="KW-1208">Phospholipid metabolism</keyword>
<keyword id="KW-1185">Reference proteome</keyword>
<keyword id="KW-0677">Repeat</keyword>
<keyword id="KW-0808">Transferase</keyword>
<keyword id="KW-0812">Transmembrane</keyword>
<keyword id="KW-1133">Transmembrane helix</keyword>
<dbReference type="EC" id="2.7.8.-" evidence="1"/>
<dbReference type="EMBL" id="AE014075">
    <property type="protein sequence ID" value="AAN80180.1"/>
    <property type="molecule type" value="Genomic_DNA"/>
</dbReference>
<dbReference type="RefSeq" id="WP_000214516.1">
    <property type="nucleotide sequence ID" value="NZ_CP051263.1"/>
</dbReference>
<dbReference type="SMR" id="P0A6H9"/>
<dbReference type="STRING" id="199310.c1713"/>
<dbReference type="DNASU" id="1035495"/>
<dbReference type="GeneID" id="93775314"/>
<dbReference type="KEGG" id="ecc:c1713"/>
<dbReference type="eggNOG" id="COG1502">
    <property type="taxonomic scope" value="Bacteria"/>
</dbReference>
<dbReference type="HOGENOM" id="CLU_038053_1_0_6"/>
<dbReference type="BioCyc" id="ECOL199310:C1713-MONOMER"/>
<dbReference type="Proteomes" id="UP000001410">
    <property type="component" value="Chromosome"/>
</dbReference>
<dbReference type="GO" id="GO:0005886">
    <property type="term" value="C:plasma membrane"/>
    <property type="evidence" value="ECO:0007669"/>
    <property type="project" value="UniProtKB-SubCell"/>
</dbReference>
<dbReference type="GO" id="GO:0008808">
    <property type="term" value="F:cardiolipin synthase activity"/>
    <property type="evidence" value="ECO:0007669"/>
    <property type="project" value="InterPro"/>
</dbReference>
<dbReference type="GO" id="GO:0032049">
    <property type="term" value="P:cardiolipin biosynthetic process"/>
    <property type="evidence" value="ECO:0007669"/>
    <property type="project" value="InterPro"/>
</dbReference>
<dbReference type="CDD" id="cd09152">
    <property type="entry name" value="PLDc_EcCLS_like_1"/>
    <property type="match status" value="1"/>
</dbReference>
<dbReference type="CDD" id="cd09158">
    <property type="entry name" value="PLDc_EcCLS_like_2"/>
    <property type="match status" value="1"/>
</dbReference>
<dbReference type="FunFam" id="3.30.870.10:FF:000002">
    <property type="entry name" value="Cardiolipin synthase A"/>
    <property type="match status" value="1"/>
</dbReference>
<dbReference type="FunFam" id="3.30.870.10:FF:000003">
    <property type="entry name" value="Cardiolipin synthase A"/>
    <property type="match status" value="1"/>
</dbReference>
<dbReference type="Gene3D" id="3.30.870.10">
    <property type="entry name" value="Endonuclease Chain A"/>
    <property type="match status" value="2"/>
</dbReference>
<dbReference type="HAMAP" id="MF_00190">
    <property type="entry name" value="Cardiolipin_synth_ClsA"/>
    <property type="match status" value="1"/>
</dbReference>
<dbReference type="InterPro" id="IPR022924">
    <property type="entry name" value="Cardiolipin_synthase"/>
</dbReference>
<dbReference type="InterPro" id="IPR030840">
    <property type="entry name" value="CL_synthase_A"/>
</dbReference>
<dbReference type="InterPro" id="IPR027379">
    <property type="entry name" value="CLS_N"/>
</dbReference>
<dbReference type="InterPro" id="IPR025202">
    <property type="entry name" value="PLD-like_dom"/>
</dbReference>
<dbReference type="InterPro" id="IPR001736">
    <property type="entry name" value="PLipase_D/transphosphatidylase"/>
</dbReference>
<dbReference type="NCBIfam" id="TIGR04265">
    <property type="entry name" value="bac_cardiolipin"/>
    <property type="match status" value="1"/>
</dbReference>
<dbReference type="PANTHER" id="PTHR21248">
    <property type="entry name" value="CARDIOLIPIN SYNTHASE"/>
    <property type="match status" value="1"/>
</dbReference>
<dbReference type="PANTHER" id="PTHR21248:SF22">
    <property type="entry name" value="PHOSPHOLIPASE D"/>
    <property type="match status" value="1"/>
</dbReference>
<dbReference type="Pfam" id="PF13091">
    <property type="entry name" value="PLDc_2"/>
    <property type="match status" value="2"/>
</dbReference>
<dbReference type="Pfam" id="PF13396">
    <property type="entry name" value="PLDc_N"/>
    <property type="match status" value="1"/>
</dbReference>
<dbReference type="SMART" id="SM00155">
    <property type="entry name" value="PLDc"/>
    <property type="match status" value="2"/>
</dbReference>
<dbReference type="SUPFAM" id="SSF56024">
    <property type="entry name" value="Phospholipase D/nuclease"/>
    <property type="match status" value="2"/>
</dbReference>
<dbReference type="PROSITE" id="PS50035">
    <property type="entry name" value="PLD"/>
    <property type="match status" value="2"/>
</dbReference>
<organism>
    <name type="scientific">Escherichia coli O6:H1 (strain CFT073 / ATCC 700928 / UPEC)</name>
    <dbReference type="NCBI Taxonomy" id="199310"/>
    <lineage>
        <taxon>Bacteria</taxon>
        <taxon>Pseudomonadati</taxon>
        <taxon>Pseudomonadota</taxon>
        <taxon>Gammaproteobacteria</taxon>
        <taxon>Enterobacterales</taxon>
        <taxon>Enterobacteriaceae</taxon>
        <taxon>Escherichia</taxon>
    </lineage>
</organism>
<protein>
    <recommendedName>
        <fullName evidence="1">Cardiolipin synthase A</fullName>
        <shortName evidence="1">CL synthase</shortName>
        <ecNumber evidence="1">2.7.8.-</ecNumber>
    </recommendedName>
</protein>
<proteinExistence type="inferred from homology"/>
<comment type="function">
    <text evidence="1">Catalyzes the reversible phosphatidyl group transfer from one phosphatidylglycerol molecule to another to form cardiolipin (CL) (diphosphatidylglycerol) and glycerol.</text>
</comment>
<comment type="catalytic activity">
    <reaction evidence="1">
        <text>2 a 1,2-diacyl-sn-glycero-3-phospho-(1'-sn-glycerol) = a cardiolipin + glycerol</text>
        <dbReference type="Rhea" id="RHEA:31451"/>
        <dbReference type="ChEBI" id="CHEBI:17754"/>
        <dbReference type="ChEBI" id="CHEBI:62237"/>
        <dbReference type="ChEBI" id="CHEBI:64716"/>
    </reaction>
</comment>
<comment type="subcellular location">
    <subcellularLocation>
        <location evidence="1">Cell inner membrane</location>
        <topology evidence="1">Multi-pass membrane protein</topology>
    </subcellularLocation>
</comment>
<comment type="similarity">
    <text evidence="1">Belongs to the phospholipase D family. Cardiolipin synthase subfamily. ClsA sub-subfamily.</text>
</comment>
<evidence type="ECO:0000255" key="1">
    <source>
        <dbReference type="HAMAP-Rule" id="MF_00190"/>
    </source>
</evidence>
<gene>
    <name evidence="1" type="primary">clsA</name>
    <name type="synonym">cls</name>
    <name type="synonym">nov</name>
    <name type="ordered locus">c1713</name>
</gene>
<feature type="chain" id="PRO_0000201254" description="Cardiolipin synthase A">
    <location>
        <begin position="1"/>
        <end position="486"/>
    </location>
</feature>
<feature type="transmembrane region" description="Helical" evidence="1">
    <location>
        <begin position="3"/>
        <end position="23"/>
    </location>
</feature>
<feature type="transmembrane region" description="Helical" evidence="1">
    <location>
        <begin position="38"/>
        <end position="58"/>
    </location>
</feature>
<feature type="domain" description="PLD phosphodiesterase 1" evidence="1">
    <location>
        <begin position="219"/>
        <end position="246"/>
    </location>
</feature>
<feature type="domain" description="PLD phosphodiesterase 2" evidence="1">
    <location>
        <begin position="399"/>
        <end position="426"/>
    </location>
</feature>
<feature type="active site" evidence="1">
    <location>
        <position position="224"/>
    </location>
</feature>
<feature type="active site" evidence="1">
    <location>
        <position position="226"/>
    </location>
</feature>
<feature type="active site" evidence="1">
    <location>
        <position position="231"/>
    </location>
</feature>
<feature type="active site" evidence="1">
    <location>
        <position position="404"/>
    </location>
</feature>
<feature type="active site" evidence="1">
    <location>
        <position position="406"/>
    </location>
</feature>
<feature type="active site" evidence="1">
    <location>
        <position position="411"/>
    </location>
</feature>
<name>CLSA_ECOL6</name>
<accession>P0A6H9</accession>
<accession>P31071</accession>
<accession>P94720</accession>
<accession>P94730</accession>
<accession>P94733</accession>
<accession>P94740</accession>
<sequence length="486" mass="54822">MTTVYTLVSWLAILGYWLLIAGVTLRILMKRRAVPSAMAWLLIIYILPLVGIIAYLAVGELHLGKRRAERARAMWPSTAKWLNDLKACKHIFAEENSSVAAPLFKLCERRQGIAGVKGNQLQLMTESDDVMQALIRDIQLARHNIEMVFYIWQPGGMADQVAESLMAAARRGIHCRLMLDSAGSVAFFRSPWPELMRNAGIEVVEALKVNLMRVFLRRMDLRQHRKMIMIDNYIAYTGSMNMVDPRYFKQDAGVGQWIDLMARMEGPIATAMGIIYSCDWEIETGKRILPPPPDVNIMPFEQASGHTIHTIASGPGFPEDLIHQALLTAAYSAREYLIMTTPYFVPSDDLLHAICTAAQRGVDVSIILPRKNDSMLVGWASRAFFTELLAAGVKIYQFEGGLLHTKSVLVDGELSLVGTVNLDMRSLWLNFEITLAIDDKGFGADLAAVQDDYISRSRLLDARLWLKRPLWQRVAERLFYFFSPLL</sequence>
<reference key="1">
    <citation type="journal article" date="2002" name="Proc. Natl. Acad. Sci. U.S.A.">
        <title>Extensive mosaic structure revealed by the complete genome sequence of uropathogenic Escherichia coli.</title>
        <authorList>
            <person name="Welch R.A."/>
            <person name="Burland V."/>
            <person name="Plunkett G. III"/>
            <person name="Redford P."/>
            <person name="Roesch P."/>
            <person name="Rasko D."/>
            <person name="Buckles E.L."/>
            <person name="Liou S.-R."/>
            <person name="Boutin A."/>
            <person name="Hackett J."/>
            <person name="Stroud D."/>
            <person name="Mayhew G.F."/>
            <person name="Rose D.J."/>
            <person name="Zhou S."/>
            <person name="Schwartz D.C."/>
            <person name="Perna N.T."/>
            <person name="Mobley H.L.T."/>
            <person name="Donnenberg M.S."/>
            <person name="Blattner F.R."/>
        </authorList>
    </citation>
    <scope>NUCLEOTIDE SEQUENCE [LARGE SCALE GENOMIC DNA]</scope>
    <source>
        <strain>CFT073 / ATCC 700928 / UPEC</strain>
    </source>
</reference>